<name>GLO2_AERS4</name>
<keyword id="KW-0378">Hydrolase</keyword>
<keyword id="KW-0479">Metal-binding</keyword>
<keyword id="KW-0862">Zinc</keyword>
<sequence length="254" mass="28638">MYTVITVPAFTDNYIWLIRHENHCLVVDPGDAGPVLDRLAALDLQLDAILLTHHHQDHVGGVTALLKHFPHARLYGPKHDPMPDHHGQWLDDGDQINWHGLSLDVIHVPGHTHGHIAYHGHGMLFCGDTLFSGGCGRLFEGTPAQMHDSLQRLAALPDDTLIYCAHEYTLSNLRFAYAVEPDNKAIQQRIGMISKLRQQGLPSLPSRLGDERDFNVFLRCEQDSVKFSAEKYALKCLENPEDTFAVLRSWKDVF</sequence>
<reference key="1">
    <citation type="journal article" date="2008" name="BMC Genomics">
        <title>The genome of Aeromonas salmonicida subsp. salmonicida A449: insights into the evolution of a fish pathogen.</title>
        <authorList>
            <person name="Reith M.E."/>
            <person name="Singh R.K."/>
            <person name="Curtis B."/>
            <person name="Boyd J.M."/>
            <person name="Bouevitch A."/>
            <person name="Kimball J."/>
            <person name="Munholland J."/>
            <person name="Murphy C."/>
            <person name="Sarty D."/>
            <person name="Williams J."/>
            <person name="Nash J.H."/>
            <person name="Johnson S.C."/>
            <person name="Brown L.L."/>
        </authorList>
    </citation>
    <scope>NUCLEOTIDE SEQUENCE [LARGE SCALE GENOMIC DNA]</scope>
    <source>
        <strain>A449</strain>
    </source>
</reference>
<proteinExistence type="inferred from homology"/>
<gene>
    <name evidence="1" type="primary">gloB</name>
    <name type="ordered locus">ASA_2790</name>
</gene>
<feature type="chain" id="PRO_1000068205" description="Hydroxyacylglutathione hydrolase">
    <location>
        <begin position="1"/>
        <end position="254"/>
    </location>
</feature>
<feature type="binding site" evidence="1">
    <location>
        <position position="53"/>
    </location>
    <ligand>
        <name>Zn(2+)</name>
        <dbReference type="ChEBI" id="CHEBI:29105"/>
        <label>1</label>
    </ligand>
</feature>
<feature type="binding site" evidence="1">
    <location>
        <position position="55"/>
    </location>
    <ligand>
        <name>Zn(2+)</name>
        <dbReference type="ChEBI" id="CHEBI:29105"/>
        <label>1</label>
    </ligand>
</feature>
<feature type="binding site" evidence="1">
    <location>
        <position position="57"/>
    </location>
    <ligand>
        <name>Zn(2+)</name>
        <dbReference type="ChEBI" id="CHEBI:29105"/>
        <label>2</label>
    </ligand>
</feature>
<feature type="binding site" evidence="1">
    <location>
        <position position="58"/>
    </location>
    <ligand>
        <name>Zn(2+)</name>
        <dbReference type="ChEBI" id="CHEBI:29105"/>
        <label>2</label>
    </ligand>
</feature>
<feature type="binding site" evidence="1">
    <location>
        <position position="111"/>
    </location>
    <ligand>
        <name>Zn(2+)</name>
        <dbReference type="ChEBI" id="CHEBI:29105"/>
        <label>1</label>
    </ligand>
</feature>
<feature type="binding site" evidence="1">
    <location>
        <position position="128"/>
    </location>
    <ligand>
        <name>Zn(2+)</name>
        <dbReference type="ChEBI" id="CHEBI:29105"/>
        <label>1</label>
    </ligand>
</feature>
<feature type="binding site" evidence="1">
    <location>
        <position position="128"/>
    </location>
    <ligand>
        <name>Zn(2+)</name>
        <dbReference type="ChEBI" id="CHEBI:29105"/>
        <label>2</label>
    </ligand>
</feature>
<feature type="binding site" evidence="1">
    <location>
        <position position="166"/>
    </location>
    <ligand>
        <name>Zn(2+)</name>
        <dbReference type="ChEBI" id="CHEBI:29105"/>
        <label>2</label>
    </ligand>
</feature>
<comment type="function">
    <text evidence="1">Thiolesterase that catalyzes the hydrolysis of S-D-lactoyl-glutathione to form glutathione and D-lactic acid.</text>
</comment>
<comment type="catalytic activity">
    <reaction evidence="1">
        <text>an S-(2-hydroxyacyl)glutathione + H2O = a 2-hydroxy carboxylate + glutathione + H(+)</text>
        <dbReference type="Rhea" id="RHEA:21864"/>
        <dbReference type="ChEBI" id="CHEBI:15377"/>
        <dbReference type="ChEBI" id="CHEBI:15378"/>
        <dbReference type="ChEBI" id="CHEBI:57925"/>
        <dbReference type="ChEBI" id="CHEBI:58896"/>
        <dbReference type="ChEBI" id="CHEBI:71261"/>
        <dbReference type="EC" id="3.1.2.6"/>
    </reaction>
</comment>
<comment type="cofactor">
    <cofactor evidence="1">
        <name>Zn(2+)</name>
        <dbReference type="ChEBI" id="CHEBI:29105"/>
    </cofactor>
    <text evidence="1">Binds 2 Zn(2+) ions per subunit.</text>
</comment>
<comment type="pathway">
    <text evidence="1">Secondary metabolite metabolism; methylglyoxal degradation; (R)-lactate from methylglyoxal: step 2/2.</text>
</comment>
<comment type="subunit">
    <text evidence="1">Monomer.</text>
</comment>
<comment type="similarity">
    <text evidence="1">Belongs to the metallo-beta-lactamase superfamily. Glyoxalase II family.</text>
</comment>
<dbReference type="EC" id="3.1.2.6" evidence="1"/>
<dbReference type="EMBL" id="CP000644">
    <property type="protein sequence ID" value="ABO90808.1"/>
    <property type="molecule type" value="Genomic_DNA"/>
</dbReference>
<dbReference type="RefSeq" id="WP_005309822.1">
    <property type="nucleotide sequence ID" value="NC_009348.1"/>
</dbReference>
<dbReference type="SMR" id="A4SPI6"/>
<dbReference type="STRING" id="29491.GCA_000820065_00020"/>
<dbReference type="KEGG" id="asa:ASA_2790"/>
<dbReference type="PATRIC" id="fig|382245.13.peg.2764"/>
<dbReference type="eggNOG" id="COG0491">
    <property type="taxonomic scope" value="Bacteria"/>
</dbReference>
<dbReference type="HOGENOM" id="CLU_030571_4_1_6"/>
<dbReference type="UniPathway" id="UPA00619">
    <property type="reaction ID" value="UER00676"/>
</dbReference>
<dbReference type="Proteomes" id="UP000000225">
    <property type="component" value="Chromosome"/>
</dbReference>
<dbReference type="GO" id="GO:0004416">
    <property type="term" value="F:hydroxyacylglutathione hydrolase activity"/>
    <property type="evidence" value="ECO:0007669"/>
    <property type="project" value="UniProtKB-UniRule"/>
</dbReference>
<dbReference type="GO" id="GO:0046872">
    <property type="term" value="F:metal ion binding"/>
    <property type="evidence" value="ECO:0007669"/>
    <property type="project" value="UniProtKB-KW"/>
</dbReference>
<dbReference type="GO" id="GO:0019243">
    <property type="term" value="P:methylglyoxal catabolic process to D-lactate via S-lactoyl-glutathione"/>
    <property type="evidence" value="ECO:0007669"/>
    <property type="project" value="InterPro"/>
</dbReference>
<dbReference type="CDD" id="cd07723">
    <property type="entry name" value="hydroxyacylglutathione_hydrolase_MBL-fold"/>
    <property type="match status" value="1"/>
</dbReference>
<dbReference type="Gene3D" id="3.60.15.10">
    <property type="entry name" value="Ribonuclease Z/Hydroxyacylglutathione hydrolase-like"/>
    <property type="match status" value="1"/>
</dbReference>
<dbReference type="HAMAP" id="MF_01374">
    <property type="entry name" value="Glyoxalase_2"/>
    <property type="match status" value="1"/>
</dbReference>
<dbReference type="InterPro" id="IPR035680">
    <property type="entry name" value="Clx_II_MBL"/>
</dbReference>
<dbReference type="InterPro" id="IPR050110">
    <property type="entry name" value="Glyoxalase_II_hydrolase"/>
</dbReference>
<dbReference type="InterPro" id="IPR032282">
    <property type="entry name" value="HAGH_C"/>
</dbReference>
<dbReference type="InterPro" id="IPR017782">
    <property type="entry name" value="Hydroxyacylglutathione_Hdrlase"/>
</dbReference>
<dbReference type="InterPro" id="IPR001279">
    <property type="entry name" value="Metallo-B-lactamas"/>
</dbReference>
<dbReference type="InterPro" id="IPR036866">
    <property type="entry name" value="RibonucZ/Hydroxyglut_hydro"/>
</dbReference>
<dbReference type="NCBIfam" id="TIGR03413">
    <property type="entry name" value="GSH_gloB"/>
    <property type="match status" value="1"/>
</dbReference>
<dbReference type="PANTHER" id="PTHR43705">
    <property type="entry name" value="HYDROXYACYLGLUTATHIONE HYDROLASE"/>
    <property type="match status" value="1"/>
</dbReference>
<dbReference type="PANTHER" id="PTHR43705:SF1">
    <property type="entry name" value="HYDROXYACYLGLUTATHIONE HYDROLASE GLOB"/>
    <property type="match status" value="1"/>
</dbReference>
<dbReference type="Pfam" id="PF16123">
    <property type="entry name" value="HAGH_C"/>
    <property type="match status" value="1"/>
</dbReference>
<dbReference type="Pfam" id="PF00753">
    <property type="entry name" value="Lactamase_B"/>
    <property type="match status" value="1"/>
</dbReference>
<dbReference type="PIRSF" id="PIRSF005457">
    <property type="entry name" value="Glx"/>
    <property type="match status" value="1"/>
</dbReference>
<dbReference type="SMART" id="SM00849">
    <property type="entry name" value="Lactamase_B"/>
    <property type="match status" value="1"/>
</dbReference>
<dbReference type="SUPFAM" id="SSF56281">
    <property type="entry name" value="Metallo-hydrolase/oxidoreductase"/>
    <property type="match status" value="1"/>
</dbReference>
<evidence type="ECO:0000255" key="1">
    <source>
        <dbReference type="HAMAP-Rule" id="MF_01374"/>
    </source>
</evidence>
<protein>
    <recommendedName>
        <fullName evidence="1">Hydroxyacylglutathione hydrolase</fullName>
        <ecNumber evidence="1">3.1.2.6</ecNumber>
    </recommendedName>
    <alternativeName>
        <fullName evidence="1">Glyoxalase II</fullName>
        <shortName evidence="1">Glx II</shortName>
    </alternativeName>
</protein>
<accession>A4SPI6</accession>
<organism>
    <name type="scientific">Aeromonas salmonicida (strain A449)</name>
    <dbReference type="NCBI Taxonomy" id="382245"/>
    <lineage>
        <taxon>Bacteria</taxon>
        <taxon>Pseudomonadati</taxon>
        <taxon>Pseudomonadota</taxon>
        <taxon>Gammaproteobacteria</taxon>
        <taxon>Aeromonadales</taxon>
        <taxon>Aeromonadaceae</taxon>
        <taxon>Aeromonas</taxon>
    </lineage>
</organism>